<gene>
    <name type="ordered locus">MJ1016</name>
</gene>
<accession>Q58422</accession>
<protein>
    <recommendedName>
        <fullName>Uncharacterized protein MJ1016</fullName>
    </recommendedName>
</protein>
<organism>
    <name type="scientific">Methanocaldococcus jannaschii (strain ATCC 43067 / DSM 2661 / JAL-1 / JCM 10045 / NBRC 100440)</name>
    <name type="common">Methanococcus jannaschii</name>
    <dbReference type="NCBI Taxonomy" id="243232"/>
    <lineage>
        <taxon>Archaea</taxon>
        <taxon>Methanobacteriati</taxon>
        <taxon>Methanobacteriota</taxon>
        <taxon>Methanomada group</taxon>
        <taxon>Methanococci</taxon>
        <taxon>Methanococcales</taxon>
        <taxon>Methanocaldococcaceae</taxon>
        <taxon>Methanocaldococcus</taxon>
    </lineage>
</organism>
<feature type="chain" id="PRO_0000107142" description="Uncharacterized protein MJ1016">
    <location>
        <begin position="1"/>
        <end position="294"/>
    </location>
</feature>
<reference key="1">
    <citation type="journal article" date="1996" name="Science">
        <title>Complete genome sequence of the methanogenic archaeon, Methanococcus jannaschii.</title>
        <authorList>
            <person name="Bult C.J."/>
            <person name="White O."/>
            <person name="Olsen G.J."/>
            <person name="Zhou L."/>
            <person name="Fleischmann R.D."/>
            <person name="Sutton G.G."/>
            <person name="Blake J.A."/>
            <person name="FitzGerald L.M."/>
            <person name="Clayton R.A."/>
            <person name="Gocayne J.D."/>
            <person name="Kerlavage A.R."/>
            <person name="Dougherty B.A."/>
            <person name="Tomb J.-F."/>
            <person name="Adams M.D."/>
            <person name="Reich C.I."/>
            <person name="Overbeek R."/>
            <person name="Kirkness E.F."/>
            <person name="Weinstock K.G."/>
            <person name="Merrick J.M."/>
            <person name="Glodek A."/>
            <person name="Scott J.L."/>
            <person name="Geoghagen N.S.M."/>
            <person name="Weidman J.F."/>
            <person name="Fuhrmann J.L."/>
            <person name="Nguyen D."/>
            <person name="Utterback T.R."/>
            <person name="Kelley J.M."/>
            <person name="Peterson J.D."/>
            <person name="Sadow P.W."/>
            <person name="Hanna M.C."/>
            <person name="Cotton M.D."/>
            <person name="Roberts K.M."/>
            <person name="Hurst M.A."/>
            <person name="Kaine B.P."/>
            <person name="Borodovsky M."/>
            <person name="Klenk H.-P."/>
            <person name="Fraser C.M."/>
            <person name="Smith H.O."/>
            <person name="Woese C.R."/>
            <person name="Venter J.C."/>
        </authorList>
    </citation>
    <scope>NUCLEOTIDE SEQUENCE [LARGE SCALE GENOMIC DNA]</scope>
    <source>
        <strain>ATCC 43067 / DSM 2661 / JAL-1 / JCM 10045 / NBRC 100440</strain>
    </source>
</reference>
<sequence>MEFSEWTKNKRKLNNLEELKRDIIEQFKEKNALDEGIVVMASGGKDSSTAIALAKDLGLNIEYLIHFYHRWSWDVSKKMVEKLSKKFDIPVIFYNITDELLKRTKGAKGSSICRICKNIMKDKAVDISKEKGIRIIMTGDSALEKVSGAVMNYLRDVYGEVVYNKMELTPVPQKYSKGKDKEVLFFRPLIRLACEDVLKLMDYYNIEIERAHEVGDKIGFWREGCCLQYADENALLNEKLFNELYKYNKIATEVAKKHGFRASIKLPSKKIMVVPKKDEYITLIKNALRDVDES</sequence>
<name>Y1016_METJA</name>
<keyword id="KW-1185">Reference proteome</keyword>
<proteinExistence type="predicted"/>
<dbReference type="EMBL" id="L77117">
    <property type="protein sequence ID" value="AAB99022.1"/>
    <property type="molecule type" value="Genomic_DNA"/>
</dbReference>
<dbReference type="PIR" id="G64426">
    <property type="entry name" value="G64426"/>
</dbReference>
<dbReference type="RefSeq" id="WP_010870529.1">
    <property type="nucleotide sequence ID" value="NC_000909.1"/>
</dbReference>
<dbReference type="SMR" id="Q58422"/>
<dbReference type="FunCoup" id="Q58422">
    <property type="interactions" value="2"/>
</dbReference>
<dbReference type="STRING" id="243232.MJ_1016"/>
<dbReference type="PaxDb" id="243232-MJ_1016"/>
<dbReference type="DNASU" id="1451913"/>
<dbReference type="EnsemblBacteria" id="AAB99022">
    <property type="protein sequence ID" value="AAB99022"/>
    <property type="gene ID" value="MJ_1016"/>
</dbReference>
<dbReference type="GeneID" id="1451913"/>
<dbReference type="KEGG" id="mja:MJ_1016"/>
<dbReference type="eggNOG" id="arCOG00044">
    <property type="taxonomic scope" value="Archaea"/>
</dbReference>
<dbReference type="HOGENOM" id="CLU_064237_0_0_2"/>
<dbReference type="InParanoid" id="Q58422"/>
<dbReference type="OrthoDB" id="61764at2157"/>
<dbReference type="PhylomeDB" id="Q58422"/>
<dbReference type="Proteomes" id="UP000000805">
    <property type="component" value="Chromosome"/>
</dbReference>
<dbReference type="Gene3D" id="3.40.50.620">
    <property type="entry name" value="HUPs"/>
    <property type="match status" value="1"/>
</dbReference>
<dbReference type="InterPro" id="IPR012122">
    <property type="entry name" value="ATPase_PP-loop_MJ1016"/>
</dbReference>
<dbReference type="InterPro" id="IPR052188">
    <property type="entry name" value="Ni-pincer_cofactor_biosynth"/>
</dbReference>
<dbReference type="InterPro" id="IPR018317">
    <property type="entry name" value="QueC"/>
</dbReference>
<dbReference type="InterPro" id="IPR014729">
    <property type="entry name" value="Rossmann-like_a/b/a_fold"/>
</dbReference>
<dbReference type="PANTHER" id="PTHR43169:SF4">
    <property type="entry name" value="ATPASE, PP-LOOP SUPERFAMILY-RELATED"/>
    <property type="match status" value="1"/>
</dbReference>
<dbReference type="PANTHER" id="PTHR43169">
    <property type="entry name" value="EXSB FAMILY PROTEIN"/>
    <property type="match status" value="1"/>
</dbReference>
<dbReference type="Pfam" id="PF06508">
    <property type="entry name" value="QueC"/>
    <property type="match status" value="1"/>
</dbReference>
<dbReference type="PIRSF" id="PIRSF036670">
    <property type="entry name" value="ATPase_UCP036670"/>
    <property type="match status" value="1"/>
</dbReference>
<dbReference type="SUPFAM" id="SSF52402">
    <property type="entry name" value="Adenine nucleotide alpha hydrolases-like"/>
    <property type="match status" value="1"/>
</dbReference>